<evidence type="ECO:0000250" key="1"/>
<evidence type="ECO:0000255" key="2"/>
<evidence type="ECO:0000269" key="3">
    <source>
    </source>
</evidence>
<evidence type="ECO:0000305" key="4"/>
<proteinExistence type="evidence at transcript level"/>
<name>GPI10_TRYBB</name>
<protein>
    <recommendedName>
        <fullName>GPI mannosyltransferase 3</fullName>
        <ecNumber>2.4.1.-</ecNumber>
    </recommendedName>
    <alternativeName>
        <fullName>GPI mannosyltransferase III</fullName>
        <shortName>GPI-MT-III</shortName>
    </alternativeName>
    <alternativeName>
        <fullName>Glycosylphosphatidylinositol-anchor biosynthesis protein 10</fullName>
    </alternativeName>
    <alternativeName>
        <fullName>TbGPI10</fullName>
    </alternativeName>
</protein>
<gene>
    <name type="primary">GPI10</name>
</gene>
<accession>P86935</accession>
<accession>Q38B48</accession>
<accession>Q9NKZ7</accession>
<organism>
    <name type="scientific">Trypanosoma brucei brucei</name>
    <dbReference type="NCBI Taxonomy" id="5702"/>
    <lineage>
        <taxon>Eukaryota</taxon>
        <taxon>Discoba</taxon>
        <taxon>Euglenozoa</taxon>
        <taxon>Kinetoplastea</taxon>
        <taxon>Metakinetoplastina</taxon>
        <taxon>Trypanosomatida</taxon>
        <taxon>Trypanosomatidae</taxon>
        <taxon>Trypanosoma</taxon>
    </lineage>
</organism>
<sequence length="558" mass="64182">MPWWLISLTFIYRLFLCATIRTVEAPDEWWQSTEVAYNMVFGKGHLPWEWRYGLRSVLFPAVVALPFYLLKLLGRDTTWAVWFAPRVLQALVLTLIDVSVFCMGATLDELLAKRELELAEETRQSKTKGFSYFCEVSVSRSRRGICNSISYTALLLSLSNWYMAYCGVRLYGNVIEALLVLLTLQQRRYVPFLLLTGLASAIRVTSAVVLSPLVFRHLANATREHGFIRGLFRIVLTGLIVLVAVLGGVMVLDYCFYGRWVLTPLAFFRFNVLHNLSRFFGEHPWYFYVGPVLVGIVGPHVLFTIAAPLVLWRDTASRAVSRPVLGMLGIGAWTLGFYSLIDHKEMRFVFVVIPLSLITAAFVLVRWSRTSAVVVKMNRLFVLFNIVMIYLMGYVYRRGPLDVMAEVRDGPRINRLDVIATCYTVPGYSYMHKKVNHLGFVDCSIDLDEKTGLPKVTEDIMFRRYPKEYVLWRYDGKHSFNMSDLEESRKASELQSVVMPKSAPHPDAMVMTRAVAKEIEEPFLKRHGYRLYRTFLHSPLTLAPYEDIYIQMWVKVTK</sequence>
<keyword id="KW-0256">Endoplasmic reticulum</keyword>
<keyword id="KW-0325">Glycoprotein</keyword>
<keyword id="KW-0328">Glycosyltransferase</keyword>
<keyword id="KW-0337">GPI-anchor biosynthesis</keyword>
<keyword id="KW-0472">Membrane</keyword>
<keyword id="KW-0808">Transferase</keyword>
<keyword id="KW-0812">Transmembrane</keyword>
<keyword id="KW-1133">Transmembrane helix</keyword>
<comment type="function">
    <text evidence="3">Mannosyltransferase involved in glycosylphosphatidylinositol-anchor biosynthesis. Transfers the third alpha-1,2-mannose to Man2-GlcN-acyl-PI during GPI precursor assembly.</text>
</comment>
<comment type="pathway">
    <text>Glycolipid biosynthesis; glycosylphosphatidylinositol-anchor biosynthesis.</text>
</comment>
<comment type="subcellular location">
    <subcellularLocation>
        <location evidence="1">Endoplasmic reticulum membrane</location>
        <topology evidence="1">Multi-pass membrane protein</topology>
    </subcellularLocation>
</comment>
<comment type="miscellaneous">
    <text>The protozoan parasite evades the immune response of mammalian hosts and digestion in the gut of the insect vector by means of its coat proteins tethered to the cell surface via GPI-anchors. GPI10 is essential for growth of mammalian stage bloodstream form, while procyclic form (insect stage parasites) are viable but grow slower, suggesting that inhibition of GPI synthesis may be an effective chemotherapy against African trypanosomiasis.</text>
</comment>
<comment type="similarity">
    <text evidence="4">Belongs to the glycosyltransferase 22 family. PIGB subfamily.</text>
</comment>
<reference key="1">
    <citation type="journal article" date="2000" name="Proc. Natl. Acad. Sci. U.S.A.">
        <title>Critical roles of glycosylphosphatidylinositol for Trypanosoma brucei.</title>
        <authorList>
            <person name="Nagamune K."/>
            <person name="Nozaki T."/>
            <person name="Maeda Y."/>
            <person name="Ohishi K."/>
            <person name="Fukuma T."/>
            <person name="Hara T."/>
            <person name="Schwarz R.T."/>
            <person name="Sutterlin C."/>
            <person name="Brun R."/>
            <person name="Riezman H."/>
            <person name="Kinoshita T."/>
        </authorList>
    </citation>
    <scope>NUCLEOTIDE SEQUENCE [MRNA]</scope>
    <scope>FUNCTION</scope>
    <source>
        <strain>427</strain>
    </source>
</reference>
<feature type="chain" id="PRO_0000246256" description="GPI mannosyltransferase 3">
    <location>
        <begin position="1"/>
        <end position="558"/>
    </location>
</feature>
<feature type="transmembrane region" description="Helical" evidence="2">
    <location>
        <begin position="53"/>
        <end position="73"/>
    </location>
</feature>
<feature type="transmembrane region" description="Helical" evidence="2">
    <location>
        <begin position="81"/>
        <end position="101"/>
    </location>
</feature>
<feature type="transmembrane region" description="Helical" evidence="2">
    <location>
        <begin position="164"/>
        <end position="184"/>
    </location>
</feature>
<feature type="transmembrane region" description="Helical" evidence="2">
    <location>
        <begin position="190"/>
        <end position="210"/>
    </location>
</feature>
<feature type="transmembrane region" description="Helical" evidence="2">
    <location>
        <begin position="234"/>
        <end position="254"/>
    </location>
</feature>
<feature type="transmembrane region" description="Helical" evidence="2">
    <location>
        <begin position="292"/>
        <end position="312"/>
    </location>
</feature>
<feature type="transmembrane region" description="Helical" evidence="2">
    <location>
        <begin position="323"/>
        <end position="343"/>
    </location>
</feature>
<feature type="transmembrane region" description="Helical" evidence="2">
    <location>
        <begin position="348"/>
        <end position="368"/>
    </location>
</feature>
<feature type="transmembrane region" description="Helical" evidence="2">
    <location>
        <begin position="372"/>
        <end position="392"/>
    </location>
</feature>
<feature type="glycosylation site" description="N-linked (GlcNAc...) asparagine" evidence="2">
    <location>
        <position position="220"/>
    </location>
</feature>
<feature type="glycosylation site" description="N-linked (GlcNAc...) asparagine" evidence="2">
    <location>
        <position position="275"/>
    </location>
</feature>
<dbReference type="EC" id="2.4.1.-"/>
<dbReference type="EMBL" id="AB033824">
    <property type="protein sequence ID" value="BAA94863.1"/>
    <property type="molecule type" value="mRNA"/>
</dbReference>
<dbReference type="GlyCosmos" id="P86935">
    <property type="glycosylation" value="2 sites, No reported glycans"/>
</dbReference>
<dbReference type="UniPathway" id="UPA00196"/>
<dbReference type="GO" id="GO:0005789">
    <property type="term" value="C:endoplasmic reticulum membrane"/>
    <property type="evidence" value="ECO:0007669"/>
    <property type="project" value="UniProtKB-SubCell"/>
</dbReference>
<dbReference type="GO" id="GO:0000026">
    <property type="term" value="F:alpha-1,2-mannosyltransferase activity"/>
    <property type="evidence" value="ECO:0007669"/>
    <property type="project" value="TreeGrafter"/>
</dbReference>
<dbReference type="GO" id="GO:0000030">
    <property type="term" value="F:mannosyltransferase activity"/>
    <property type="evidence" value="ECO:0000304"/>
    <property type="project" value="GeneDB"/>
</dbReference>
<dbReference type="GO" id="GO:0006506">
    <property type="term" value="P:GPI anchor biosynthetic process"/>
    <property type="evidence" value="ECO:0007669"/>
    <property type="project" value="UniProtKB-UniPathway"/>
</dbReference>
<dbReference type="InterPro" id="IPR005599">
    <property type="entry name" value="GPI_mannosylTrfase"/>
</dbReference>
<dbReference type="PANTHER" id="PTHR22760">
    <property type="entry name" value="GLYCOSYLTRANSFERASE"/>
    <property type="match status" value="1"/>
</dbReference>
<dbReference type="PANTHER" id="PTHR22760:SF4">
    <property type="entry name" value="GPI MANNOSYLTRANSFERASE 3"/>
    <property type="match status" value="1"/>
</dbReference>
<dbReference type="Pfam" id="PF03901">
    <property type="entry name" value="Glyco_transf_22"/>
    <property type="match status" value="1"/>
</dbReference>